<comment type="function">
    <text evidence="1">F(1)F(0) ATP synthase produces ATP from ADP in the presence of a proton or sodium gradient. F-type ATPases consist of two structural domains, F(1) containing the extramembraneous catalytic core and F(0) containing the membrane proton channel, linked together by a central stalk and a peripheral stalk. During catalysis, ATP synthesis in the catalytic domain of F(1) is coupled via a rotary mechanism of the central stalk subunits to proton translocation.</text>
</comment>
<comment type="function">
    <text evidence="1">This protein is part of the stalk that links CF(0) to CF(1). It either transmits conformational changes from CF(0) to CF(1) or is implicated in proton conduction.</text>
</comment>
<comment type="subunit">
    <text evidence="1">F-type ATPases have 2 components, F(1) - the catalytic core - and F(0) - the membrane proton channel. F(1) has five subunits: alpha(3), beta(3), gamma(1), delta(1), epsilon(1). F(0) has three main subunits: a(1), b(2) and c(10-14). The alpha and beta chains form an alternating ring which encloses part of the gamma chain. F(1) is attached to F(0) by a central stalk formed by the gamma and epsilon chains, while a peripheral stalk is formed by the delta and b chains.</text>
</comment>
<comment type="subcellular location">
    <subcellularLocation>
        <location evidence="1">Cell inner membrane</location>
        <topology evidence="1">Peripheral membrane protein</topology>
    </subcellularLocation>
</comment>
<comment type="similarity">
    <text evidence="1">Belongs to the ATPase delta chain family.</text>
</comment>
<protein>
    <recommendedName>
        <fullName evidence="1">ATP synthase subunit delta</fullName>
    </recommendedName>
    <alternativeName>
        <fullName evidence="1">ATP synthase F(1) sector subunit delta</fullName>
    </alternativeName>
    <alternativeName>
        <fullName evidence="1">F-type ATPase subunit delta</fullName>
        <shortName evidence="1">F-ATPase subunit delta</shortName>
    </alternativeName>
</protein>
<feature type="chain" id="PRO_0000382072" description="ATP synthase subunit delta">
    <location>
        <begin position="1"/>
        <end position="176"/>
    </location>
</feature>
<proteinExistence type="inferred from homology"/>
<reference key="1">
    <citation type="submission" date="2007-07" db="EMBL/GenBank/DDBJ databases">
        <title>Complete genome sequence of Campylobacter hominis ATCC BAA-381, a commensal isolated from the human gastrointestinal tract.</title>
        <authorList>
            <person name="Fouts D.E."/>
            <person name="Mongodin E.F."/>
            <person name="Puiu D."/>
            <person name="Sebastian Y."/>
            <person name="Miller W.G."/>
            <person name="Mandrell R.E."/>
            <person name="Nelson K.E."/>
        </authorList>
    </citation>
    <scope>NUCLEOTIDE SEQUENCE [LARGE SCALE GENOMIC DNA]</scope>
    <source>
        <strain>ATCC BAA-381 / DSM 21671 / CCUG 45161 / LMG 19568 / NCTC 13146 / CH001A</strain>
    </source>
</reference>
<keyword id="KW-0066">ATP synthesis</keyword>
<keyword id="KW-0997">Cell inner membrane</keyword>
<keyword id="KW-1003">Cell membrane</keyword>
<keyword id="KW-0139">CF(1)</keyword>
<keyword id="KW-0375">Hydrogen ion transport</keyword>
<keyword id="KW-0406">Ion transport</keyword>
<keyword id="KW-0472">Membrane</keyword>
<keyword id="KW-1185">Reference proteome</keyword>
<keyword id="KW-0813">Transport</keyword>
<accession>A7I174</accession>
<gene>
    <name evidence="1" type="primary">atpH</name>
    <name type="ordered locus">CHAB381_0684</name>
</gene>
<sequence length="176" mass="19796">MSENIAKRYVKALIEVCKKDELNDVLKGLKAIVSAFSVAKFNDIIKSPTVSKKDKISLILSFLKEPNVKIENLLKILMKNGRISLLPQIYDGIKESIALSNNEYQGKIYTKENLDEPTIKLLETNFSKKLNANIKFVCIAGNYTGVKIDISDLGYEISFSIDRLKSAMSEYILKAI</sequence>
<name>ATPD_CAMHC</name>
<evidence type="ECO:0000255" key="1">
    <source>
        <dbReference type="HAMAP-Rule" id="MF_01416"/>
    </source>
</evidence>
<organism>
    <name type="scientific">Campylobacter hominis (strain ATCC BAA-381 / DSM 21671 / CCUG 45161 / LMG 19568 / NCTC 13146 / CH001A)</name>
    <dbReference type="NCBI Taxonomy" id="360107"/>
    <lineage>
        <taxon>Bacteria</taxon>
        <taxon>Pseudomonadati</taxon>
        <taxon>Campylobacterota</taxon>
        <taxon>Epsilonproteobacteria</taxon>
        <taxon>Campylobacterales</taxon>
        <taxon>Campylobacteraceae</taxon>
        <taxon>Campylobacter</taxon>
    </lineage>
</organism>
<dbReference type="EMBL" id="CP000776">
    <property type="protein sequence ID" value="ABS51872.1"/>
    <property type="molecule type" value="Genomic_DNA"/>
</dbReference>
<dbReference type="RefSeq" id="WP_012108552.1">
    <property type="nucleotide sequence ID" value="NC_009714.1"/>
</dbReference>
<dbReference type="SMR" id="A7I174"/>
<dbReference type="STRING" id="360107.CHAB381_0684"/>
<dbReference type="KEGG" id="cha:CHAB381_0684"/>
<dbReference type="eggNOG" id="COG0712">
    <property type="taxonomic scope" value="Bacteria"/>
</dbReference>
<dbReference type="HOGENOM" id="CLU_085114_3_1_7"/>
<dbReference type="OrthoDB" id="5339308at2"/>
<dbReference type="Proteomes" id="UP000002407">
    <property type="component" value="Chromosome"/>
</dbReference>
<dbReference type="GO" id="GO:0005886">
    <property type="term" value="C:plasma membrane"/>
    <property type="evidence" value="ECO:0007669"/>
    <property type="project" value="UniProtKB-SubCell"/>
</dbReference>
<dbReference type="GO" id="GO:0045259">
    <property type="term" value="C:proton-transporting ATP synthase complex"/>
    <property type="evidence" value="ECO:0007669"/>
    <property type="project" value="UniProtKB-KW"/>
</dbReference>
<dbReference type="GO" id="GO:0046933">
    <property type="term" value="F:proton-transporting ATP synthase activity, rotational mechanism"/>
    <property type="evidence" value="ECO:0007669"/>
    <property type="project" value="UniProtKB-UniRule"/>
</dbReference>
<dbReference type="Gene3D" id="1.10.520.20">
    <property type="entry name" value="N-terminal domain of the delta subunit of the F1F0-ATP synthase"/>
    <property type="match status" value="1"/>
</dbReference>
<dbReference type="HAMAP" id="MF_01416">
    <property type="entry name" value="ATP_synth_delta_bact"/>
    <property type="match status" value="1"/>
</dbReference>
<dbReference type="InterPro" id="IPR026015">
    <property type="entry name" value="ATP_synth_OSCP/delta_N_sf"/>
</dbReference>
<dbReference type="InterPro" id="IPR000711">
    <property type="entry name" value="ATPase_OSCP/dsu"/>
</dbReference>
<dbReference type="NCBIfam" id="NF006291">
    <property type="entry name" value="PRK08474.1"/>
    <property type="match status" value="1"/>
</dbReference>
<dbReference type="PANTHER" id="PTHR11910">
    <property type="entry name" value="ATP SYNTHASE DELTA CHAIN"/>
    <property type="match status" value="1"/>
</dbReference>
<dbReference type="Pfam" id="PF00213">
    <property type="entry name" value="OSCP"/>
    <property type="match status" value="1"/>
</dbReference>
<dbReference type="PRINTS" id="PR00125">
    <property type="entry name" value="ATPASEDELTA"/>
</dbReference>
<dbReference type="SUPFAM" id="SSF47928">
    <property type="entry name" value="N-terminal domain of the delta subunit of the F1F0-ATP synthase"/>
    <property type="match status" value="1"/>
</dbReference>